<name>PSBL_CUNLA</name>
<proteinExistence type="inferred from homology"/>
<sequence>MTQSNPNEQNVELNRTSLYWGLLLIFVLAVLFSNYFFN</sequence>
<reference key="1">
    <citation type="submission" date="2002-07" db="EMBL/GenBank/DDBJ databases">
        <title>Parsing out signal and noise for seed-plant phylogenetic inference.</title>
        <authorList>
            <person name="Graham S.W."/>
            <person name="Rai H.S."/>
            <person name="Ikegami K."/>
            <person name="Reeves P.A."/>
            <person name="Olmstead R.G."/>
        </authorList>
    </citation>
    <scope>NUCLEOTIDE SEQUENCE [GENOMIC DNA]</scope>
</reference>
<dbReference type="EMBL" id="AF528871">
    <property type="protein sequence ID" value="AAQ09284.1"/>
    <property type="molecule type" value="Genomic_DNA"/>
</dbReference>
<dbReference type="RefSeq" id="YP_008082147.1">
    <property type="nucleotide sequence ID" value="NC_021437.1"/>
</dbReference>
<dbReference type="SMR" id="Q6EYT9"/>
<dbReference type="GeneID" id="15824168"/>
<dbReference type="GO" id="GO:0009535">
    <property type="term" value="C:chloroplast thylakoid membrane"/>
    <property type="evidence" value="ECO:0007669"/>
    <property type="project" value="UniProtKB-SubCell"/>
</dbReference>
<dbReference type="GO" id="GO:0009539">
    <property type="term" value="C:photosystem II reaction center"/>
    <property type="evidence" value="ECO:0007669"/>
    <property type="project" value="InterPro"/>
</dbReference>
<dbReference type="GO" id="GO:0015979">
    <property type="term" value="P:photosynthesis"/>
    <property type="evidence" value="ECO:0007669"/>
    <property type="project" value="UniProtKB-UniRule"/>
</dbReference>
<dbReference type="HAMAP" id="MF_01317">
    <property type="entry name" value="PSII_PsbL"/>
    <property type="match status" value="1"/>
</dbReference>
<dbReference type="InterPro" id="IPR003372">
    <property type="entry name" value="PSII_PsbL"/>
</dbReference>
<dbReference type="InterPro" id="IPR037266">
    <property type="entry name" value="PSII_PsbL_sf"/>
</dbReference>
<dbReference type="NCBIfam" id="NF001972">
    <property type="entry name" value="PRK00753.1"/>
    <property type="match status" value="1"/>
</dbReference>
<dbReference type="Pfam" id="PF02419">
    <property type="entry name" value="PsbL"/>
    <property type="match status" value="1"/>
</dbReference>
<dbReference type="SUPFAM" id="SSF161017">
    <property type="entry name" value="Photosystem II reaction center protein L, PsbL"/>
    <property type="match status" value="1"/>
</dbReference>
<feature type="chain" id="PRO_0000219702" description="Photosystem II reaction center protein L">
    <location>
        <begin position="1"/>
        <end position="38"/>
    </location>
</feature>
<feature type="transmembrane region" description="Helical" evidence="1">
    <location>
        <begin position="17"/>
        <end position="37"/>
    </location>
</feature>
<organism>
    <name type="scientific">Cunninghamia lanceolata</name>
    <name type="common">China fir</name>
    <name type="synonym">Pinus lanceolata</name>
    <dbReference type="NCBI Taxonomy" id="28977"/>
    <lineage>
        <taxon>Eukaryota</taxon>
        <taxon>Viridiplantae</taxon>
        <taxon>Streptophyta</taxon>
        <taxon>Embryophyta</taxon>
        <taxon>Tracheophyta</taxon>
        <taxon>Spermatophyta</taxon>
        <taxon>Pinopsida</taxon>
        <taxon>Pinidae</taxon>
        <taxon>Conifers II</taxon>
        <taxon>Cupressales</taxon>
        <taxon>Cupressaceae</taxon>
        <taxon>Cunninghamia</taxon>
    </lineage>
</organism>
<keyword id="KW-0150">Chloroplast</keyword>
<keyword id="KW-0472">Membrane</keyword>
<keyword id="KW-0602">Photosynthesis</keyword>
<keyword id="KW-0604">Photosystem II</keyword>
<keyword id="KW-0934">Plastid</keyword>
<keyword id="KW-0674">Reaction center</keyword>
<keyword id="KW-0793">Thylakoid</keyword>
<keyword id="KW-0812">Transmembrane</keyword>
<keyword id="KW-1133">Transmembrane helix</keyword>
<accession>Q6EYT9</accession>
<geneLocation type="chloroplast"/>
<gene>
    <name evidence="1" type="primary">psbL</name>
</gene>
<evidence type="ECO:0000255" key="1">
    <source>
        <dbReference type="HAMAP-Rule" id="MF_01317"/>
    </source>
</evidence>
<comment type="function">
    <text evidence="1">One of the components of the core complex of photosystem II (PSII). PSII is a light-driven water:plastoquinone oxidoreductase that uses light energy to abstract electrons from H(2)O, generating O(2) and a proton gradient subsequently used for ATP formation. It consists of a core antenna complex that captures photons, and an electron transfer chain that converts photonic excitation into a charge separation. This subunit is found at the monomer-monomer interface and is required for correct PSII assembly and/or dimerization.</text>
</comment>
<comment type="subunit">
    <text evidence="1">PSII is composed of 1 copy each of membrane proteins PsbA, PsbB, PsbC, PsbD, PsbE, PsbF, PsbH, PsbI, PsbJ, PsbK, PsbL, PsbM, PsbT, PsbX, PsbY, PsbZ, Psb30/Ycf12, at least 3 peripheral proteins of the oxygen-evolving complex and a large number of cofactors. It forms dimeric complexes.</text>
</comment>
<comment type="subcellular location">
    <subcellularLocation>
        <location evidence="1">Plastid</location>
        <location evidence="1">Chloroplast thylakoid membrane</location>
        <topology evidence="1">Single-pass membrane protein</topology>
    </subcellularLocation>
</comment>
<comment type="similarity">
    <text evidence="1">Belongs to the PsbL family.</text>
</comment>
<protein>
    <recommendedName>
        <fullName evidence="1">Photosystem II reaction center protein L</fullName>
        <shortName evidence="1">PSII-L</shortName>
    </recommendedName>
</protein>